<gene>
    <name evidence="1" type="primary">gltX1</name>
    <name type="ordered locus">HPSH_02345</name>
</gene>
<sequence length="463" mass="53324">MSLIVTRFAPSPTGYLHIGGLRTAIFNYLFARANQGKFFLRIEDTDLSRNSIEAANAIIEAFKWVGLEHDGEILYQSKRFGIYKEYIQKLLDEDKAYYCYMSKDELDALREEQKARKETPRYDNRYRDFKGTPPKGIEPVVRIKVPQNEIIGFNDGVKGEVKVNTNELDDFIIARSDGTPTYNFVVTIDDALMGITDVIRGDDHLSNTPKQIVLYKALNFKIPNFFHVPMILNEEGQKLSKRHGATNVMDYQEMGYLKEALVNFLARLGWSCHDKEVFSMQELLKWFDPKDLNSSPSCFSWHKLNWLNAHYLKNQSAQRLLELLKPFNFSDLSHLNPTQLDRLLDALKERSQTLKELALKIDEVLIAPVEYEEKVFKKLNQALVMPLLEKFKLELNKANFNDESVLENAMHKIIEEEKIKAGSFMQPLRLALLGKGGGIGLKEALFILGKTESVKRIEEFLKN</sequence>
<proteinExistence type="inferred from homology"/>
<protein>
    <recommendedName>
        <fullName evidence="1">Glutamate--tRNA ligase 1</fullName>
        <ecNumber evidence="1">6.1.1.17</ecNumber>
    </recommendedName>
    <alternativeName>
        <fullName evidence="1">Glutamyl-tRNA synthetase 1</fullName>
        <shortName evidence="1">GluRS 1</shortName>
    </alternativeName>
</protein>
<feature type="chain" id="PRO_0000367687" description="Glutamate--tRNA ligase 1">
    <location>
        <begin position="1"/>
        <end position="463"/>
    </location>
</feature>
<feature type="short sequence motif" description="'HIGH' region" evidence="1">
    <location>
        <begin position="10"/>
        <end position="20"/>
    </location>
</feature>
<feature type="short sequence motif" description="'KMSKS' region" evidence="1">
    <location>
        <begin position="238"/>
        <end position="242"/>
    </location>
</feature>
<feature type="binding site" evidence="1">
    <location>
        <position position="241"/>
    </location>
    <ligand>
        <name>ATP</name>
        <dbReference type="ChEBI" id="CHEBI:30616"/>
    </ligand>
</feature>
<organism>
    <name type="scientific">Helicobacter pylori (strain Shi470)</name>
    <dbReference type="NCBI Taxonomy" id="512562"/>
    <lineage>
        <taxon>Bacteria</taxon>
        <taxon>Pseudomonadati</taxon>
        <taxon>Campylobacterota</taxon>
        <taxon>Epsilonproteobacteria</taxon>
        <taxon>Campylobacterales</taxon>
        <taxon>Helicobacteraceae</taxon>
        <taxon>Helicobacter</taxon>
    </lineage>
</organism>
<keyword id="KW-0030">Aminoacyl-tRNA synthetase</keyword>
<keyword id="KW-0067">ATP-binding</keyword>
<keyword id="KW-0963">Cytoplasm</keyword>
<keyword id="KW-0436">Ligase</keyword>
<keyword id="KW-0547">Nucleotide-binding</keyword>
<keyword id="KW-0648">Protein biosynthesis</keyword>
<comment type="function">
    <text evidence="1">Catalyzes the attachment of glutamate to tRNA(Glu) in a two-step reaction: glutamate is first activated by ATP to form Glu-AMP and then transferred to the acceptor end of tRNA(Glu).</text>
</comment>
<comment type="catalytic activity">
    <reaction evidence="1">
        <text>tRNA(Glu) + L-glutamate + ATP = L-glutamyl-tRNA(Glu) + AMP + diphosphate</text>
        <dbReference type="Rhea" id="RHEA:23540"/>
        <dbReference type="Rhea" id="RHEA-COMP:9663"/>
        <dbReference type="Rhea" id="RHEA-COMP:9680"/>
        <dbReference type="ChEBI" id="CHEBI:29985"/>
        <dbReference type="ChEBI" id="CHEBI:30616"/>
        <dbReference type="ChEBI" id="CHEBI:33019"/>
        <dbReference type="ChEBI" id="CHEBI:78442"/>
        <dbReference type="ChEBI" id="CHEBI:78520"/>
        <dbReference type="ChEBI" id="CHEBI:456215"/>
        <dbReference type="EC" id="6.1.1.17"/>
    </reaction>
</comment>
<comment type="subunit">
    <text evidence="1">Monomer.</text>
</comment>
<comment type="subcellular location">
    <subcellularLocation>
        <location evidence="1">Cytoplasm</location>
    </subcellularLocation>
</comment>
<comment type="similarity">
    <text evidence="1">Belongs to the class-I aminoacyl-tRNA synthetase family. Glutamate--tRNA ligase type 1 subfamily.</text>
</comment>
<accession>B2UST7</accession>
<reference key="1">
    <citation type="submission" date="2008-05" db="EMBL/GenBank/DDBJ databases">
        <title>Genome sequence of Helicobacter pylori from the remote Amazon: traces of Asian ancestry of the first Americans.</title>
        <authorList>
            <person name="Kersulyte D."/>
            <person name="Kalia A."/>
            <person name="Gilman R.H."/>
            <person name="Berg D.E."/>
        </authorList>
    </citation>
    <scope>NUCLEOTIDE SEQUENCE [LARGE SCALE GENOMIC DNA]</scope>
    <source>
        <strain>Shi470</strain>
    </source>
</reference>
<evidence type="ECO:0000255" key="1">
    <source>
        <dbReference type="HAMAP-Rule" id="MF_00022"/>
    </source>
</evidence>
<name>SYE1_HELPS</name>
<dbReference type="EC" id="6.1.1.17" evidence="1"/>
<dbReference type="EMBL" id="CP001072">
    <property type="protein sequence ID" value="ACD47919.1"/>
    <property type="molecule type" value="Genomic_DNA"/>
</dbReference>
<dbReference type="RefSeq" id="WP_000053210.1">
    <property type="nucleotide sequence ID" value="NC_010698.2"/>
</dbReference>
<dbReference type="SMR" id="B2UST7"/>
<dbReference type="KEGG" id="hps:HPSH_02345"/>
<dbReference type="HOGENOM" id="CLU_015768_6_3_7"/>
<dbReference type="GO" id="GO:0005829">
    <property type="term" value="C:cytosol"/>
    <property type="evidence" value="ECO:0007669"/>
    <property type="project" value="TreeGrafter"/>
</dbReference>
<dbReference type="GO" id="GO:0005524">
    <property type="term" value="F:ATP binding"/>
    <property type="evidence" value="ECO:0007669"/>
    <property type="project" value="UniProtKB-UniRule"/>
</dbReference>
<dbReference type="GO" id="GO:0004818">
    <property type="term" value="F:glutamate-tRNA ligase activity"/>
    <property type="evidence" value="ECO:0007669"/>
    <property type="project" value="UniProtKB-UniRule"/>
</dbReference>
<dbReference type="GO" id="GO:0000049">
    <property type="term" value="F:tRNA binding"/>
    <property type="evidence" value="ECO:0007669"/>
    <property type="project" value="InterPro"/>
</dbReference>
<dbReference type="GO" id="GO:0008270">
    <property type="term" value="F:zinc ion binding"/>
    <property type="evidence" value="ECO:0007669"/>
    <property type="project" value="InterPro"/>
</dbReference>
<dbReference type="GO" id="GO:0006424">
    <property type="term" value="P:glutamyl-tRNA aminoacylation"/>
    <property type="evidence" value="ECO:0007669"/>
    <property type="project" value="UniProtKB-UniRule"/>
</dbReference>
<dbReference type="CDD" id="cd00808">
    <property type="entry name" value="GluRS_core"/>
    <property type="match status" value="1"/>
</dbReference>
<dbReference type="FunFam" id="3.40.50.620:FF:000288">
    <property type="entry name" value="Glutamate--tRNA ligase 1"/>
    <property type="match status" value="1"/>
</dbReference>
<dbReference type="Gene3D" id="1.10.10.350">
    <property type="match status" value="1"/>
</dbReference>
<dbReference type="Gene3D" id="3.40.50.620">
    <property type="entry name" value="HUPs"/>
    <property type="match status" value="1"/>
</dbReference>
<dbReference type="HAMAP" id="MF_00022">
    <property type="entry name" value="Glu_tRNA_synth_type1"/>
    <property type="match status" value="1"/>
</dbReference>
<dbReference type="InterPro" id="IPR045462">
    <property type="entry name" value="aa-tRNA-synth_I_cd-bd"/>
</dbReference>
<dbReference type="InterPro" id="IPR020751">
    <property type="entry name" value="aa-tRNA-synth_I_codon-bd_sub2"/>
</dbReference>
<dbReference type="InterPro" id="IPR001412">
    <property type="entry name" value="aa-tRNA-synth_I_CS"/>
</dbReference>
<dbReference type="InterPro" id="IPR008925">
    <property type="entry name" value="aa_tRNA-synth_I_cd-bd_sf"/>
</dbReference>
<dbReference type="InterPro" id="IPR004527">
    <property type="entry name" value="Glu-tRNA-ligase_bac/mito"/>
</dbReference>
<dbReference type="InterPro" id="IPR000924">
    <property type="entry name" value="Glu/Gln-tRNA-synth"/>
</dbReference>
<dbReference type="InterPro" id="IPR020058">
    <property type="entry name" value="Glu/Gln-tRNA-synth_Ib_cat-dom"/>
</dbReference>
<dbReference type="InterPro" id="IPR049940">
    <property type="entry name" value="GluQ/Sye"/>
</dbReference>
<dbReference type="InterPro" id="IPR033910">
    <property type="entry name" value="GluRS_core"/>
</dbReference>
<dbReference type="InterPro" id="IPR014729">
    <property type="entry name" value="Rossmann-like_a/b/a_fold"/>
</dbReference>
<dbReference type="NCBIfam" id="TIGR00464">
    <property type="entry name" value="gltX_bact"/>
    <property type="match status" value="1"/>
</dbReference>
<dbReference type="NCBIfam" id="NF004314">
    <property type="entry name" value="PRK05710.1-3"/>
    <property type="match status" value="1"/>
</dbReference>
<dbReference type="PANTHER" id="PTHR43311">
    <property type="entry name" value="GLUTAMATE--TRNA LIGASE"/>
    <property type="match status" value="1"/>
</dbReference>
<dbReference type="PANTHER" id="PTHR43311:SF2">
    <property type="entry name" value="GLUTAMATE--TRNA LIGASE, MITOCHONDRIAL-RELATED"/>
    <property type="match status" value="1"/>
</dbReference>
<dbReference type="Pfam" id="PF19269">
    <property type="entry name" value="Anticodon_2"/>
    <property type="match status" value="1"/>
</dbReference>
<dbReference type="Pfam" id="PF00749">
    <property type="entry name" value="tRNA-synt_1c"/>
    <property type="match status" value="1"/>
</dbReference>
<dbReference type="PRINTS" id="PR00987">
    <property type="entry name" value="TRNASYNTHGLU"/>
</dbReference>
<dbReference type="SUPFAM" id="SSF48163">
    <property type="entry name" value="An anticodon-binding domain of class I aminoacyl-tRNA synthetases"/>
    <property type="match status" value="1"/>
</dbReference>
<dbReference type="SUPFAM" id="SSF52374">
    <property type="entry name" value="Nucleotidylyl transferase"/>
    <property type="match status" value="1"/>
</dbReference>
<dbReference type="PROSITE" id="PS00178">
    <property type="entry name" value="AA_TRNA_LIGASE_I"/>
    <property type="match status" value="1"/>
</dbReference>